<dbReference type="EMBL" id="GU828034">
    <property type="protein sequence ID" value="ADE87883.1"/>
    <property type="molecule type" value="mRNA"/>
</dbReference>
<dbReference type="GO" id="GO:0005576">
    <property type="term" value="C:extracellular region"/>
    <property type="evidence" value="ECO:0007669"/>
    <property type="project" value="UniProtKB-SubCell"/>
</dbReference>
<reference evidence="7" key="1">
    <citation type="journal article" date="2010" name="J. Biol. Chem.">
        <title>Two immunoregulatory peptides with antioxidant activity from tick salivary glands.</title>
        <authorList>
            <person name="Wu J."/>
            <person name="Wang Y."/>
            <person name="Liu H."/>
            <person name="Yang H."/>
            <person name="Ma D."/>
            <person name="Li J."/>
            <person name="Li D."/>
            <person name="Lai R."/>
            <person name="Yu H."/>
        </authorList>
    </citation>
    <scope>NUCLEOTIDE SEQUENCE [MRNA]</scope>
    <scope>PROTEIN SEQUENCE OF 46-56; 95-105; 108-141 AND 144-154</scope>
    <scope>FUNCTION</scope>
    <scope>MASS SPECTROMETRY</scope>
    <scope>MUTAGENESIS OF TYR-55; TYR-66 AND TYR-90</scope>
    <source>
        <tissue>Salivary gland</tissue>
    </source>
</reference>
<proteinExistence type="evidence at protein level"/>
<comment type="function">
    <molecule>Hyalomin-A1</molecule>
    <text evidence="3">Suppress host inflammatory response. Exerts significant anti-inflammatory functions, either by directly inhibiting host secretion of inflammatory factors such as tumor necrosis factor-alpha (TNF), monocyte chemotactic protein-1 (CCL2), and interferon-gamma (IFNG) or by indirectly increasing the secretion of immunosuppressant cytokine of interleukin-10 (IL10). Also potently scavenges free radical in vitro in a rapid manner. All tested concentrations of this peptide have little effect on the cell viability. In vivo, inhibits hind paw adjuvant-induced inflammation in mouse in a dose-dependent manner.</text>
</comment>
<comment type="function">
    <molecule>Hyalomin-B1</molecule>
    <text evidence="3">Suppress host inflammatory response. Exerts significant anti-inflammatory functions, either by directly inhibiting host secretion of inflammatory factors such as tumor necrosis factor-alpha (TNF), monocyte chemotactic protein-1 (CCL2), and interferon-gamma (IFNG) or by indirectly increasing the secretion of immunosuppressant cytokine of interleukin-10 (IL10). Also potently scavenges free radical in vitro in a rapid manner. Low concentrations of this peptide have little effect on the cell viability, whereas high concentrations increase the cell viability by 10-20%. In vivo, inhibits hind paw adjuvant-induced inflammation in mouse in a dose-dependent manner.</text>
</comment>
<comment type="function">
    <molecule>Hyalomin-B2</molecule>
    <text evidence="5">Not studied but probably similar to Hyalomin-B1.</text>
</comment>
<comment type="function">
    <molecule>Hyalomin-B3</molecule>
    <text evidence="5">Not studied but probably similar to Hyalomin-B1.</text>
</comment>
<comment type="subcellular location">
    <subcellularLocation>
        <location evidence="6">Secreted</location>
    </subcellularLocation>
</comment>
<comment type="tissue specificity">
    <text evidence="6">Salivary glands.</text>
</comment>
<comment type="mass spectrometry">
    <molecule>Hyalomin-A1</molecule>
</comment>
<comment type="mass spectrometry">
    <molecule>Hyalomin-B2</molecule>
</comment>
<comment type="caution">
    <text evidence="6">The sequence TLRTTTGYWTTVEKGNGTTPAANSTEKGNRPYGR described in the text of Wu et al., 2010 as Hyalomin-B1 is indicated as Hyalomin-B2 in Fig.1b. Therefore, it is uncertain whether the function described for Hyalomin-B1 is not the function of Hyalomin-B2.</text>
</comment>
<evidence type="ECO:0000255" key="1"/>
<evidence type="ECO:0000256" key="2">
    <source>
        <dbReference type="SAM" id="MobiDB-lite"/>
    </source>
</evidence>
<evidence type="ECO:0000269" key="3">
    <source>
    </source>
</evidence>
<evidence type="ECO:0000303" key="4">
    <source>
    </source>
</evidence>
<evidence type="ECO:0000305" key="5"/>
<evidence type="ECO:0000305" key="6">
    <source>
    </source>
</evidence>
<evidence type="ECO:0000312" key="7">
    <source>
        <dbReference type="EMBL" id="ADE87883.1"/>
    </source>
</evidence>
<name>AIP_HYAAS</name>
<keyword id="KW-0165">Cleavage on pair of basic residues</keyword>
<keyword id="KW-0903">Direct protein sequencing</keyword>
<keyword id="KW-0964">Secreted</keyword>
<keyword id="KW-0732">Signal</keyword>
<feature type="signal peptide" evidence="1">
    <location>
        <begin position="1"/>
        <end position="19"/>
    </location>
</feature>
<feature type="propeptide" id="PRO_0000455210" evidence="5">
    <location>
        <begin position="20"/>
        <end position="45"/>
    </location>
</feature>
<feature type="peptide" id="PRO_0000455211" description="Hyalomin-A1" evidence="3">
    <location>
        <begin position="46"/>
        <end position="56"/>
    </location>
</feature>
<feature type="chain" id="PRO_5003074030" description="Hyalomin-B1" evidence="3">
    <location>
        <begin position="59"/>
        <end position="92"/>
    </location>
</feature>
<feature type="peptide" id="PRO_0000455212" description="Hyalomin-A1" evidence="3">
    <location>
        <begin position="95"/>
        <end position="105"/>
    </location>
</feature>
<feature type="chain" id="PRO_0000455213" description="Hyalomin-B2" evidence="6">
    <location>
        <begin position="108"/>
        <end position="141"/>
    </location>
</feature>
<feature type="peptide" id="PRO_0000455214" description="Hyalomin-A1" evidence="3">
    <location>
        <begin position="144"/>
        <end position="154"/>
    </location>
</feature>
<feature type="chain" id="PRO_0000455215" description="Hyalomin-B3" evidence="6">
    <location>
        <begin position="157"/>
        <end position="188"/>
    </location>
</feature>
<feature type="propeptide" id="PRO_0000455216" evidence="5">
    <location>
        <begin position="191"/>
        <end position="221"/>
    </location>
</feature>
<feature type="region of interest" description="Disordered" evidence="2">
    <location>
        <begin position="21"/>
        <end position="155"/>
    </location>
</feature>
<feature type="compositionally biased region" description="Polar residues" evidence="2">
    <location>
        <begin position="25"/>
        <end position="34"/>
    </location>
</feature>
<feature type="compositionally biased region" description="Low complexity" evidence="2">
    <location>
        <begin position="48"/>
        <end position="69"/>
    </location>
</feature>
<feature type="compositionally biased region" description="Polar residues" evidence="2">
    <location>
        <begin position="70"/>
        <end position="85"/>
    </location>
</feature>
<feature type="compositionally biased region" description="Polar residues" evidence="2">
    <location>
        <begin position="123"/>
        <end position="133"/>
    </location>
</feature>
<feature type="mutagenesis site" description="High decrease in antioxidant cability." evidence="3">
    <original>Y</original>
    <variation>G</variation>
    <location>
        <position position="55"/>
    </location>
</feature>
<feature type="mutagenesis site" description="High decrease in antioxidant cability." evidence="3">
    <original>Y</original>
    <variation>G</variation>
    <location>
        <position position="66"/>
    </location>
</feature>
<feature type="mutagenesis site" description="Low decrease in antioxidant cability." evidence="3">
    <original>Y</original>
    <variation>G</variation>
    <location>
        <position position="90"/>
    </location>
</feature>
<sequence>MNYLCLVVTLVAVAGAISGEKFSDDNTGYQSTPSLRIRTTPGRRRQTPRTIGPPYTRRTLRTTTDYSTTVENGNLTTPAANSTEKGNGLYGLRRQTPRTIGPPYTRRTLRTTTGYWTTVEKGNGTTPAANSTEKGNRPYGRRRQTPRTIGPPYTRRTTTDYWAAVEKGYLTTPAANSTEKESRPNATQRREISWTFGPLYTWRTTKGYGTTLETTNATSTS</sequence>
<organism>
    <name type="scientific">Hyalomma asiaticum asiaticum</name>
    <name type="common">Tick</name>
    <dbReference type="NCBI Taxonomy" id="266039"/>
    <lineage>
        <taxon>Eukaryota</taxon>
        <taxon>Metazoa</taxon>
        <taxon>Ecdysozoa</taxon>
        <taxon>Arthropoda</taxon>
        <taxon>Chelicerata</taxon>
        <taxon>Arachnida</taxon>
        <taxon>Acari</taxon>
        <taxon>Parasitiformes</taxon>
        <taxon>Ixodida</taxon>
        <taxon>Ixodoidea</taxon>
        <taxon>Ixodidae</taxon>
        <taxon>Hyalomminae</taxon>
        <taxon>Hyalomma</taxon>
    </lineage>
</organism>
<protein>
    <recommendedName>
        <fullName evidence="4">Immunoregulatory peptides</fullName>
    </recommendedName>
    <alternativeName>
        <fullName evidence="5">Anti-inflammatory peptides</fullName>
    </alternativeName>
    <component>
        <recommendedName>
            <fullName evidence="4">Hyalomin-A1</fullName>
        </recommendedName>
    </component>
    <component>
        <recommendedName>
            <fullName evidence="4">Hyalomin-B1</fullName>
        </recommendedName>
    </component>
    <component>
        <recommendedName>
            <fullName evidence="4">Hyalomin-B2</fullName>
        </recommendedName>
    </component>
    <component>
        <recommendedName>
            <fullName evidence="4">Hyalomin-B3</fullName>
        </recommendedName>
    </component>
</protein>
<accession>D5LGE0</accession>